<comment type="function">
    <text evidence="1">Catalyzes the formation of 4-diphosphocytidyl-2-C-methyl-D-erythritol from CTP and 2-C-methyl-D-erythritol 4-phosphate (MEP).</text>
</comment>
<comment type="catalytic activity">
    <reaction evidence="1">
        <text>2-C-methyl-D-erythritol 4-phosphate + CTP + H(+) = 4-CDP-2-C-methyl-D-erythritol + diphosphate</text>
        <dbReference type="Rhea" id="RHEA:13429"/>
        <dbReference type="ChEBI" id="CHEBI:15378"/>
        <dbReference type="ChEBI" id="CHEBI:33019"/>
        <dbReference type="ChEBI" id="CHEBI:37563"/>
        <dbReference type="ChEBI" id="CHEBI:57823"/>
        <dbReference type="ChEBI" id="CHEBI:58262"/>
        <dbReference type="EC" id="2.7.7.60"/>
    </reaction>
</comment>
<comment type="pathway">
    <text evidence="1">Isoprenoid biosynthesis; isopentenyl diphosphate biosynthesis via DXP pathway; isopentenyl diphosphate from 1-deoxy-D-xylulose 5-phosphate: step 2/6.</text>
</comment>
<comment type="similarity">
    <text evidence="1">Belongs to the IspD/TarI cytidylyltransferase family. IspD subfamily.</text>
</comment>
<name>ISPD_BACP2</name>
<evidence type="ECO:0000255" key="1">
    <source>
        <dbReference type="HAMAP-Rule" id="MF_00108"/>
    </source>
</evidence>
<gene>
    <name evidence="1" type="primary">ispD</name>
    <name type="ordered locus">BPUM_0075</name>
</gene>
<accession>A8F958</accession>
<keyword id="KW-0414">Isoprene biosynthesis</keyword>
<keyword id="KW-0548">Nucleotidyltransferase</keyword>
<keyword id="KW-0808">Transferase</keyword>
<proteinExistence type="inferred from homology"/>
<sequence length="229" mass="25802">MYYEVVIPAAGQGKRMKAGRNKLFIELKRMPVIIHTLKVFDAHAQCKRMILAINEEERQDFERLLKVHAFQTPVSLVNGGEERQQSVYEGLKAVKDADIVLVHDGARPFIKHTQIDLLVKAAIEKGSAVVAVPVKDTIKRVQEGKVEQTIERQSLWAVQTPQAFRHSILKEAHEYAERTGFLGTDDASLVEQLHGENVYIVQGDYTNIKLTTPDDLLVAKAIMDAERGY</sequence>
<feature type="chain" id="PRO_1000057715" description="2-C-methyl-D-erythritol 4-phosphate cytidylyltransferase">
    <location>
        <begin position="1"/>
        <end position="229"/>
    </location>
</feature>
<feature type="site" description="Transition state stabilizer" evidence="1">
    <location>
        <position position="15"/>
    </location>
</feature>
<feature type="site" description="Transition state stabilizer" evidence="1">
    <location>
        <position position="22"/>
    </location>
</feature>
<feature type="site" description="Positions MEP for the nucleophilic attack" evidence="1">
    <location>
        <position position="152"/>
    </location>
</feature>
<feature type="site" description="Positions MEP for the nucleophilic attack" evidence="1">
    <location>
        <position position="209"/>
    </location>
</feature>
<organism>
    <name type="scientific">Bacillus pumilus (strain SAFR-032)</name>
    <dbReference type="NCBI Taxonomy" id="315750"/>
    <lineage>
        <taxon>Bacteria</taxon>
        <taxon>Bacillati</taxon>
        <taxon>Bacillota</taxon>
        <taxon>Bacilli</taxon>
        <taxon>Bacillales</taxon>
        <taxon>Bacillaceae</taxon>
        <taxon>Bacillus</taxon>
    </lineage>
</organism>
<reference key="1">
    <citation type="journal article" date="2007" name="PLoS ONE">
        <title>Paradoxical DNA repair and peroxide resistance gene conservation in Bacillus pumilus SAFR-032.</title>
        <authorList>
            <person name="Gioia J."/>
            <person name="Yerrapragada S."/>
            <person name="Qin X."/>
            <person name="Jiang H."/>
            <person name="Igboeli O.C."/>
            <person name="Muzny D."/>
            <person name="Dugan-Rocha S."/>
            <person name="Ding Y."/>
            <person name="Hawes A."/>
            <person name="Liu W."/>
            <person name="Perez L."/>
            <person name="Kovar C."/>
            <person name="Dinh H."/>
            <person name="Lee S."/>
            <person name="Nazareth L."/>
            <person name="Blyth P."/>
            <person name="Holder M."/>
            <person name="Buhay C."/>
            <person name="Tirumalai M.R."/>
            <person name="Liu Y."/>
            <person name="Dasgupta I."/>
            <person name="Bokhetache L."/>
            <person name="Fujita M."/>
            <person name="Karouia F."/>
            <person name="Eswara Moorthy P."/>
            <person name="Siefert J."/>
            <person name="Uzman A."/>
            <person name="Buzumbo P."/>
            <person name="Verma A."/>
            <person name="Zwiya H."/>
            <person name="McWilliams B.D."/>
            <person name="Olowu A."/>
            <person name="Clinkenbeard K.D."/>
            <person name="Newcombe D."/>
            <person name="Golebiewski L."/>
            <person name="Petrosino J.F."/>
            <person name="Nicholson W.L."/>
            <person name="Fox G.E."/>
            <person name="Venkateswaran K."/>
            <person name="Highlander S.K."/>
            <person name="Weinstock G.M."/>
        </authorList>
    </citation>
    <scope>NUCLEOTIDE SEQUENCE [LARGE SCALE GENOMIC DNA]</scope>
    <source>
        <strain>SAFR-032</strain>
    </source>
</reference>
<protein>
    <recommendedName>
        <fullName evidence="1">2-C-methyl-D-erythritol 4-phosphate cytidylyltransferase</fullName>
        <ecNumber evidence="1">2.7.7.60</ecNumber>
    </recommendedName>
    <alternativeName>
        <fullName evidence="1">4-diphosphocytidyl-2C-methyl-D-erythritol synthase</fullName>
    </alternativeName>
    <alternativeName>
        <fullName evidence="1">MEP cytidylyltransferase</fullName>
        <shortName evidence="1">MCT</shortName>
    </alternativeName>
</protein>
<dbReference type="EC" id="2.7.7.60" evidence="1"/>
<dbReference type="EMBL" id="CP000813">
    <property type="protein sequence ID" value="ABV60775.1"/>
    <property type="molecule type" value="Genomic_DNA"/>
</dbReference>
<dbReference type="RefSeq" id="WP_012008688.1">
    <property type="nucleotide sequence ID" value="NZ_VEIS01000020.1"/>
</dbReference>
<dbReference type="SMR" id="A8F958"/>
<dbReference type="STRING" id="315750.BPUM_0075"/>
<dbReference type="GeneID" id="5619319"/>
<dbReference type="KEGG" id="bpu:BPUM_0075"/>
<dbReference type="eggNOG" id="COG1211">
    <property type="taxonomic scope" value="Bacteria"/>
</dbReference>
<dbReference type="HOGENOM" id="CLU_061281_2_2_9"/>
<dbReference type="OrthoDB" id="9806837at2"/>
<dbReference type="UniPathway" id="UPA00056">
    <property type="reaction ID" value="UER00093"/>
</dbReference>
<dbReference type="Proteomes" id="UP000001355">
    <property type="component" value="Chromosome"/>
</dbReference>
<dbReference type="GO" id="GO:0050518">
    <property type="term" value="F:2-C-methyl-D-erythritol 4-phosphate cytidylyltransferase activity"/>
    <property type="evidence" value="ECO:0007669"/>
    <property type="project" value="UniProtKB-UniRule"/>
</dbReference>
<dbReference type="GO" id="GO:0019288">
    <property type="term" value="P:isopentenyl diphosphate biosynthetic process, methylerythritol 4-phosphate pathway"/>
    <property type="evidence" value="ECO:0007669"/>
    <property type="project" value="UniProtKB-UniRule"/>
</dbReference>
<dbReference type="CDD" id="cd02516">
    <property type="entry name" value="CDP-ME_synthetase"/>
    <property type="match status" value="1"/>
</dbReference>
<dbReference type="FunFam" id="3.90.550.10:FF:000003">
    <property type="entry name" value="2-C-methyl-D-erythritol 4-phosphate cytidylyltransferase"/>
    <property type="match status" value="1"/>
</dbReference>
<dbReference type="Gene3D" id="3.90.550.10">
    <property type="entry name" value="Spore Coat Polysaccharide Biosynthesis Protein SpsA, Chain A"/>
    <property type="match status" value="1"/>
</dbReference>
<dbReference type="HAMAP" id="MF_00108">
    <property type="entry name" value="IspD"/>
    <property type="match status" value="1"/>
</dbReference>
<dbReference type="InterPro" id="IPR001228">
    <property type="entry name" value="IspD"/>
</dbReference>
<dbReference type="InterPro" id="IPR034683">
    <property type="entry name" value="IspD/TarI"/>
</dbReference>
<dbReference type="InterPro" id="IPR050088">
    <property type="entry name" value="IspD/TarI_cytidylyltransf_bact"/>
</dbReference>
<dbReference type="InterPro" id="IPR018294">
    <property type="entry name" value="ISPD_synthase_CS"/>
</dbReference>
<dbReference type="InterPro" id="IPR029044">
    <property type="entry name" value="Nucleotide-diphossugar_trans"/>
</dbReference>
<dbReference type="NCBIfam" id="TIGR00453">
    <property type="entry name" value="ispD"/>
    <property type="match status" value="1"/>
</dbReference>
<dbReference type="PANTHER" id="PTHR32125">
    <property type="entry name" value="2-C-METHYL-D-ERYTHRITOL 4-PHOSPHATE CYTIDYLYLTRANSFERASE, CHLOROPLASTIC"/>
    <property type="match status" value="1"/>
</dbReference>
<dbReference type="PANTHER" id="PTHR32125:SF4">
    <property type="entry name" value="2-C-METHYL-D-ERYTHRITOL 4-PHOSPHATE CYTIDYLYLTRANSFERASE, CHLOROPLASTIC"/>
    <property type="match status" value="1"/>
</dbReference>
<dbReference type="Pfam" id="PF01128">
    <property type="entry name" value="IspD"/>
    <property type="match status" value="1"/>
</dbReference>
<dbReference type="SUPFAM" id="SSF53448">
    <property type="entry name" value="Nucleotide-diphospho-sugar transferases"/>
    <property type="match status" value="1"/>
</dbReference>
<dbReference type="PROSITE" id="PS01295">
    <property type="entry name" value="ISPD"/>
    <property type="match status" value="1"/>
</dbReference>